<gene>
    <name type="ORF">ORF2</name>
</gene>
<protein>
    <recommendedName>
        <fullName>Probable movement protein p8</fullName>
    </recommendedName>
</protein>
<reference key="1">
    <citation type="journal article" date="1998" name="Virology">
        <title>Nucleotide sequence and infectivity of a full-length cDNA clone of panicum mosaic virus.</title>
        <authorList>
            <person name="Turina M."/>
            <person name="Maruoka M."/>
            <person name="Monis J."/>
            <person name="Jackson A.O."/>
            <person name="Scholthof K.B."/>
        </authorList>
    </citation>
    <scope>NUCLEOTIDE SEQUENCE [GENOMIC RNA]</scope>
</reference>
<reference key="2">
    <citation type="journal article" date="2000" name="Virology">
        <title>A gene cluster encoded by panicum mosaic virus is associated with virus movement.</title>
        <authorList>
            <person name="Turina M."/>
            <person name="Desvoyes B."/>
            <person name="Scholthof K.B."/>
        </authorList>
    </citation>
    <scope>SUBCELLULAR LOCATION</scope>
</reference>
<comment type="function">
    <text evidence="3">Cell-to-cell movement.</text>
</comment>
<comment type="subcellular location">
    <subcellularLocation>
        <location evidence="2">Host cell wall</location>
    </subcellularLocation>
</comment>
<comment type="similarity">
    <text evidence="3">Belongs to the carmovirus/necrovirus/panicovirus movement protein p8 family.</text>
</comment>
<proteinExistence type="inferred from homology"/>
<dbReference type="EMBL" id="U55002">
    <property type="protein sequence ID" value="AAC97553.1"/>
    <property type="molecule type" value="Genomic_RNA"/>
</dbReference>
<dbReference type="RefSeq" id="NP_068345.1">
    <property type="nucleotide sequence ID" value="NC_002598.1"/>
</dbReference>
<dbReference type="SMR" id="P90335"/>
<dbReference type="KEGG" id="vg:912247"/>
<dbReference type="Proteomes" id="UP000001665">
    <property type="component" value="Segment"/>
</dbReference>
<dbReference type="GO" id="GO:0044158">
    <property type="term" value="C:host cell wall"/>
    <property type="evidence" value="ECO:0007669"/>
    <property type="project" value="UniProtKB-SubCell"/>
</dbReference>
<dbReference type="GO" id="GO:0046740">
    <property type="term" value="P:transport of virus in host, cell to cell"/>
    <property type="evidence" value="ECO:0007669"/>
    <property type="project" value="UniProtKB-KW"/>
</dbReference>
<dbReference type="InterPro" id="IPR007982">
    <property type="entry name" value="Tombusvirus_movement"/>
</dbReference>
<dbReference type="Pfam" id="PF05318">
    <property type="entry name" value="Tombus_movement"/>
    <property type="match status" value="1"/>
</dbReference>
<organismHost>
    <name type="scientific">Muhlenbergia</name>
    <dbReference type="NCBI Taxonomy" id="58090"/>
</organismHost>
<organismHost>
    <name type="scientific">Panicum virgatum</name>
    <name type="common">Blackwell switchgrass</name>
    <dbReference type="NCBI Taxonomy" id="38727"/>
</organismHost>
<keyword id="KW-1185">Reference proteome</keyword>
<keyword id="KW-0813">Transport</keyword>
<keyword id="KW-0916">Viral movement protein</keyword>
<feature type="chain" id="PRO_0000399493" description="Probable movement protein p8">
    <location>
        <begin position="1"/>
        <end position="73"/>
    </location>
</feature>
<feature type="region of interest" description="Disordered" evidence="1">
    <location>
        <begin position="1"/>
        <end position="48"/>
    </location>
</feature>
<feature type="compositionally biased region" description="Polar residues" evidence="1">
    <location>
        <begin position="1"/>
        <end position="12"/>
    </location>
</feature>
<feature type="compositionally biased region" description="Basic and acidic residues" evidence="1">
    <location>
        <begin position="16"/>
        <end position="27"/>
    </location>
</feature>
<sequence length="73" mass="7930">MSTVETPAQDTLATKEPNKTGAKDRQQARSARLSVAAGAGRTALSQRDAQEDRFSLGIVQTADKIENTFNFNF</sequence>
<accession>P90335</accession>
<organism>
    <name type="scientific">Panicum mosaic virus (strain United States/Kansas 109S)</name>
    <name type="common">PMV</name>
    <dbReference type="NCBI Taxonomy" id="652599"/>
    <lineage>
        <taxon>Viruses</taxon>
        <taxon>Riboviria</taxon>
        <taxon>Orthornavirae</taxon>
        <taxon>Kitrinoviricota</taxon>
        <taxon>Tolucaviricetes</taxon>
        <taxon>Tolivirales</taxon>
        <taxon>Tombusviridae</taxon>
        <taxon>Procedovirinae</taxon>
        <taxon>Panicovirus</taxon>
        <taxon>Panicovirus panici</taxon>
    </lineage>
</organism>
<name>MP8_PMVK</name>
<evidence type="ECO:0000256" key="1">
    <source>
        <dbReference type="SAM" id="MobiDB-lite"/>
    </source>
</evidence>
<evidence type="ECO:0000269" key="2">
    <source>
    </source>
</evidence>
<evidence type="ECO:0000305" key="3"/>